<proteinExistence type="evidence at protein level"/>
<gene>
    <name evidence="8" type="primary">YVC1</name>
    <name type="ordered locus">YOR087W</name>
    <name type="ORF">YOR088W</name>
    <name type="ORF">YOR3151W</name>
</gene>
<evidence type="ECO:0000255" key="1"/>
<evidence type="ECO:0000269" key="2">
    <source>
    </source>
</evidence>
<evidence type="ECO:0000269" key="3">
    <source>
    </source>
</evidence>
<evidence type="ECO:0000269" key="4">
    <source>
    </source>
</evidence>
<evidence type="ECO:0000305" key="5"/>
<evidence type="ECO:0000312" key="6">
    <source>
        <dbReference type="EMBL" id="CAA64009.1"/>
    </source>
</evidence>
<evidence type="ECO:0000312" key="7">
    <source>
        <dbReference type="EMBL" id="CAA99283.1"/>
    </source>
</evidence>
<evidence type="ECO:0000312" key="8">
    <source>
        <dbReference type="SGD" id="S000005613"/>
    </source>
</evidence>
<evidence type="ECO:0007744" key="9">
    <source>
    </source>
</evidence>
<evidence type="ECO:0007744" key="10">
    <source>
    </source>
</evidence>
<evidence type="ECO:0007829" key="11">
    <source>
        <dbReference type="PDB" id="6WHG"/>
    </source>
</evidence>
<name>YVC1_YEAST</name>
<keyword id="KW-0002">3D-structure</keyword>
<keyword id="KW-0106">Calcium</keyword>
<keyword id="KW-0107">Calcium channel</keyword>
<keyword id="KW-0109">Calcium transport</keyword>
<keyword id="KW-0407">Ion channel</keyword>
<keyword id="KW-0406">Ion transport</keyword>
<keyword id="KW-0472">Membrane</keyword>
<keyword id="KW-0597">Phosphoprotein</keyword>
<keyword id="KW-1185">Reference proteome</keyword>
<keyword id="KW-0812">Transmembrane</keyword>
<keyword id="KW-1133">Transmembrane helix</keyword>
<keyword id="KW-0813">Transport</keyword>
<keyword id="KW-0926">Vacuole</keyword>
<feature type="chain" id="PRO_0000215376" description="Calcium channel YVC1">
    <location>
        <begin position="1"/>
        <end position="675"/>
    </location>
</feature>
<feature type="topological domain" description="Cytoplasmic" evidence="1">
    <location>
        <begin position="1"/>
        <end position="236"/>
    </location>
</feature>
<feature type="transmembrane region" description="Helical" evidence="1">
    <location>
        <begin position="237"/>
        <end position="257"/>
    </location>
</feature>
<feature type="topological domain" description="Vacuolar" evidence="1">
    <location>
        <begin position="258"/>
        <end position="295"/>
    </location>
</feature>
<feature type="transmembrane region" description="Helical" evidence="1">
    <location>
        <begin position="296"/>
        <end position="316"/>
    </location>
</feature>
<feature type="topological domain" description="Cytoplasmic" evidence="1">
    <location>
        <begin position="317"/>
        <end position="335"/>
    </location>
</feature>
<feature type="transmembrane region" description="Helical" evidence="1">
    <location>
        <begin position="336"/>
        <end position="355"/>
    </location>
</feature>
<feature type="topological domain" description="Vacuolar" evidence="1">
    <location>
        <begin position="356"/>
        <end position="376"/>
    </location>
</feature>
<feature type="transmembrane region" description="Helical" evidence="1">
    <location>
        <begin position="377"/>
        <end position="397"/>
    </location>
</feature>
<feature type="topological domain" description="Cytoplasmic" evidence="1">
    <location>
        <begin position="398"/>
        <end position="405"/>
    </location>
</feature>
<feature type="transmembrane region" description="Helical" evidence="1">
    <location>
        <begin position="406"/>
        <end position="426"/>
    </location>
</feature>
<feature type="topological domain" description="Vacuolar" evidence="1">
    <location>
        <begin position="427"/>
        <end position="436"/>
    </location>
</feature>
<feature type="transmembrane region" description="Helical" evidence="1">
    <location>
        <begin position="437"/>
        <end position="457"/>
    </location>
</feature>
<feature type="topological domain" description="Cytoplasmic" evidence="1">
    <location>
        <begin position="458"/>
        <end position="675"/>
    </location>
</feature>
<feature type="modified residue" description="Phosphothreonine" evidence="9 10">
    <location>
        <position position="636"/>
    </location>
</feature>
<feature type="helix" evidence="11">
    <location>
        <begin position="32"/>
        <end position="49"/>
    </location>
</feature>
<feature type="helix" evidence="11">
    <location>
        <begin position="69"/>
        <end position="77"/>
    </location>
</feature>
<feature type="strand" evidence="11">
    <location>
        <begin position="86"/>
        <end position="88"/>
    </location>
</feature>
<feature type="helix" evidence="11">
    <location>
        <begin position="89"/>
        <end position="93"/>
    </location>
</feature>
<feature type="helix" evidence="11">
    <location>
        <begin position="96"/>
        <end position="113"/>
    </location>
</feature>
<feature type="helix" evidence="11">
    <location>
        <begin position="118"/>
        <end position="142"/>
    </location>
</feature>
<feature type="helix" evidence="11">
    <location>
        <begin position="144"/>
        <end position="149"/>
    </location>
</feature>
<feature type="turn" evidence="11">
    <location>
        <begin position="150"/>
        <end position="153"/>
    </location>
</feature>
<feature type="strand" evidence="11">
    <location>
        <begin position="160"/>
        <end position="163"/>
    </location>
</feature>
<feature type="helix" evidence="11">
    <location>
        <begin position="170"/>
        <end position="176"/>
    </location>
</feature>
<feature type="helix" evidence="11">
    <location>
        <begin position="180"/>
        <end position="183"/>
    </location>
</feature>
<feature type="helix" evidence="11">
    <location>
        <begin position="186"/>
        <end position="196"/>
    </location>
</feature>
<feature type="helix" evidence="11">
    <location>
        <begin position="228"/>
        <end position="231"/>
    </location>
</feature>
<feature type="helix" evidence="11">
    <location>
        <begin position="233"/>
        <end position="252"/>
    </location>
</feature>
<feature type="turn" evidence="11">
    <location>
        <begin position="253"/>
        <end position="256"/>
    </location>
</feature>
<feature type="strand" evidence="11">
    <location>
        <begin position="260"/>
        <end position="262"/>
    </location>
</feature>
<feature type="helix" evidence="11">
    <location>
        <begin position="268"/>
        <end position="290"/>
    </location>
</feature>
<feature type="helix" evidence="11">
    <location>
        <begin position="298"/>
        <end position="321"/>
    </location>
</feature>
<feature type="helix" evidence="11">
    <location>
        <begin position="330"/>
        <end position="342"/>
    </location>
</feature>
<feature type="helix" evidence="11">
    <location>
        <begin position="345"/>
        <end position="350"/>
    </location>
</feature>
<feature type="helix" evidence="11">
    <location>
        <begin position="351"/>
        <end position="356"/>
    </location>
</feature>
<feature type="helix" evidence="11">
    <location>
        <begin position="360"/>
        <end position="400"/>
    </location>
</feature>
<feature type="strand" evidence="11">
    <location>
        <begin position="401"/>
        <end position="403"/>
    </location>
</feature>
<feature type="helix" evidence="11">
    <location>
        <begin position="407"/>
        <end position="416"/>
    </location>
</feature>
<feature type="helix" evidence="11">
    <location>
        <begin position="417"/>
        <end position="419"/>
    </location>
</feature>
<feature type="turn" evidence="11">
    <location>
        <begin position="424"/>
        <end position="430"/>
    </location>
</feature>
<feature type="helix" evidence="11">
    <location>
        <begin position="434"/>
        <end position="447"/>
    </location>
</feature>
<feature type="helix" evidence="11">
    <location>
        <begin position="450"/>
        <end position="467"/>
    </location>
</feature>
<feature type="helix" evidence="11">
    <location>
        <begin position="469"/>
        <end position="483"/>
    </location>
</feature>
<feature type="helix" evidence="11">
    <location>
        <begin position="518"/>
        <end position="551"/>
    </location>
</feature>
<feature type="strand" evidence="11">
    <location>
        <begin position="556"/>
        <end position="558"/>
    </location>
</feature>
<feature type="helix" evidence="11">
    <location>
        <begin position="582"/>
        <end position="599"/>
    </location>
</feature>
<reference evidence="5" key="1">
    <citation type="journal article" date="2001" name="Proc. Natl. Acad. Sci. U.S.A.">
        <title>A TRP homolog in Saccharomyces cerevisiae forms an intracellular Ca(2+)-permeable channel in the yeast vacuolar membrane.</title>
        <authorList>
            <person name="Palmer C.P."/>
            <person name="Zhou X.-L."/>
            <person name="Lin J."/>
            <person name="Loukin S.H."/>
            <person name="Kung C."/>
            <person name="Saimi Y."/>
        </authorList>
    </citation>
    <scope>NUCLEOTIDE SEQUENCE [GENOMIC DNA]</scope>
    <scope>FUNCTION</scope>
    <scope>SUBCELLULAR LOCATION</scope>
    <scope>TOPOLOGY</scope>
    <scope>IDENTIFICATION OF FRAMESHIFT</scope>
    <source>
        <strain>ATCC 201389 / BY4742</strain>
    </source>
</reference>
<reference evidence="6" key="2">
    <citation type="journal article" date="1997" name="Yeast">
        <title>DNA sequencing and analysis of 130 kb from yeast chromosome XV.</title>
        <authorList>
            <person name="Voss H."/>
            <person name="Benes V."/>
            <person name="Andrade M.A."/>
            <person name="Valencia A."/>
            <person name="Rechmann S."/>
            <person name="Teodoru C."/>
            <person name="Schwager C."/>
            <person name="Paces V."/>
            <person name="Sander C."/>
            <person name="Ansorge W."/>
        </authorList>
    </citation>
    <scope>NUCLEOTIDE SEQUENCE [GENOMIC DNA]</scope>
</reference>
<reference evidence="5 7" key="3">
    <citation type="journal article" date="1997" name="Nature">
        <title>The nucleotide sequence of Saccharomyces cerevisiae chromosome XV.</title>
        <authorList>
            <person name="Dujon B."/>
            <person name="Albermann K."/>
            <person name="Aldea M."/>
            <person name="Alexandraki D."/>
            <person name="Ansorge W."/>
            <person name="Arino J."/>
            <person name="Benes V."/>
            <person name="Bohn C."/>
            <person name="Bolotin-Fukuhara M."/>
            <person name="Bordonne R."/>
            <person name="Boyer J."/>
            <person name="Camasses A."/>
            <person name="Casamayor A."/>
            <person name="Casas C."/>
            <person name="Cheret G."/>
            <person name="Cziepluch C."/>
            <person name="Daignan-Fornier B."/>
            <person name="Dang V.-D."/>
            <person name="de Haan M."/>
            <person name="Delius H."/>
            <person name="Durand P."/>
            <person name="Fairhead C."/>
            <person name="Feldmann H."/>
            <person name="Gaillon L."/>
            <person name="Galisson F."/>
            <person name="Gamo F.-J."/>
            <person name="Gancedo C."/>
            <person name="Goffeau A."/>
            <person name="Goulding S.E."/>
            <person name="Grivell L.A."/>
            <person name="Habbig B."/>
            <person name="Hand N.J."/>
            <person name="Hani J."/>
            <person name="Hattenhorst U."/>
            <person name="Hebling U."/>
            <person name="Hernando Y."/>
            <person name="Herrero E."/>
            <person name="Heumann K."/>
            <person name="Hiesel R."/>
            <person name="Hilger F."/>
            <person name="Hofmann B."/>
            <person name="Hollenberg C.P."/>
            <person name="Hughes B."/>
            <person name="Jauniaux J.-C."/>
            <person name="Kalogeropoulos A."/>
            <person name="Katsoulou C."/>
            <person name="Kordes E."/>
            <person name="Lafuente M.J."/>
            <person name="Landt O."/>
            <person name="Louis E.J."/>
            <person name="Maarse A.C."/>
            <person name="Madania A."/>
            <person name="Mannhaupt G."/>
            <person name="Marck C."/>
            <person name="Martin R.P."/>
            <person name="Mewes H.-W."/>
            <person name="Michaux G."/>
            <person name="Paces V."/>
            <person name="Parle-McDermott A.G."/>
            <person name="Pearson B.M."/>
            <person name="Perrin A."/>
            <person name="Pettersson B."/>
            <person name="Poch O."/>
            <person name="Pohl T.M."/>
            <person name="Poirey R."/>
            <person name="Portetelle D."/>
            <person name="Pujol A."/>
            <person name="Purnelle B."/>
            <person name="Ramezani Rad M."/>
            <person name="Rechmann S."/>
            <person name="Schwager C."/>
            <person name="Schweizer M."/>
            <person name="Sor F."/>
            <person name="Sterky F."/>
            <person name="Tarassov I.A."/>
            <person name="Teodoru C."/>
            <person name="Tettelin H."/>
            <person name="Thierry A."/>
            <person name="Tobiasch E."/>
            <person name="Tzermia M."/>
            <person name="Uhlen M."/>
            <person name="Unseld M."/>
            <person name="Valens M."/>
            <person name="Vandenbol M."/>
            <person name="Vetter I."/>
            <person name="Vlcek C."/>
            <person name="Voet M."/>
            <person name="Volckaert G."/>
            <person name="Voss H."/>
            <person name="Wambutt R."/>
            <person name="Wedler H."/>
            <person name="Wiemann S."/>
            <person name="Winsor B."/>
            <person name="Wolfe K.H."/>
            <person name="Zollner A."/>
            <person name="Zumstein E."/>
            <person name="Kleine K."/>
        </authorList>
    </citation>
    <scope>NUCLEOTIDE SEQUENCE [LARGE SCALE GENOMIC DNA]</scope>
    <source>
        <strain>ATCC 204508 / S288c</strain>
    </source>
</reference>
<reference key="4">
    <citation type="journal article" date="2014" name="G3 (Bethesda)">
        <title>The reference genome sequence of Saccharomyces cerevisiae: Then and now.</title>
        <authorList>
            <person name="Engel S.R."/>
            <person name="Dietrich F.S."/>
            <person name="Fisk D.G."/>
            <person name="Binkley G."/>
            <person name="Balakrishnan R."/>
            <person name="Costanzo M.C."/>
            <person name="Dwight S.S."/>
            <person name="Hitz B.C."/>
            <person name="Karra K."/>
            <person name="Nash R.S."/>
            <person name="Weng S."/>
            <person name="Wong E.D."/>
            <person name="Lloyd P."/>
            <person name="Skrzypek M.S."/>
            <person name="Miyasato S.R."/>
            <person name="Simison M."/>
            <person name="Cherry J.M."/>
        </authorList>
    </citation>
    <scope>GENOME REANNOTATION</scope>
    <source>
        <strain>ATCC 204508 / S288c</strain>
    </source>
</reference>
<reference evidence="5" key="5">
    <citation type="journal article" date="2002" name="J. Cell Biol.">
        <title>Internal Ca(2+) release in yeast is triggered by hypertonic shock and mediated by a TRP channel homologue.</title>
        <authorList>
            <person name="Denis V."/>
            <person name="Cyert M.S."/>
        </authorList>
    </citation>
    <scope>FUNCTION</scope>
    <scope>SUBCELLULAR LOCATION</scope>
</reference>
<reference evidence="5" key="6">
    <citation type="journal article" date="2003" name="Nature">
        <title>Sequencing and comparison of yeast species to identify genes and regulatory elements.</title>
        <authorList>
            <person name="Kellis M."/>
            <person name="Patterson N."/>
            <person name="Endrizzi M."/>
            <person name="Birren B.W."/>
            <person name="Lander E.S."/>
        </authorList>
    </citation>
    <scope>IDENTIFICATION OF FRAMESHIFT</scope>
</reference>
<reference key="7">
    <citation type="journal article" date="2003" name="Nature">
        <title>Global analysis of protein expression in yeast.</title>
        <authorList>
            <person name="Ghaemmaghami S."/>
            <person name="Huh W.-K."/>
            <person name="Bower K."/>
            <person name="Howson R.W."/>
            <person name="Belle A."/>
            <person name="Dephoure N."/>
            <person name="O'Shea E.K."/>
            <person name="Weissman J.S."/>
        </authorList>
    </citation>
    <scope>LEVEL OF PROTEIN EXPRESSION [LARGE SCALE ANALYSIS]</scope>
</reference>
<reference key="8">
    <citation type="journal article" date="2006" name="Proc. Natl. Acad. Sci. U.S.A.">
        <title>A global topology map of the Saccharomyces cerevisiae membrane proteome.</title>
        <authorList>
            <person name="Kim H."/>
            <person name="Melen K."/>
            <person name="Oesterberg M."/>
            <person name="von Heijne G."/>
        </authorList>
    </citation>
    <scope>TOPOLOGY [LARGE SCALE ANALYSIS]</scope>
    <source>
        <strain>ATCC 208353 / W303-1A</strain>
    </source>
</reference>
<reference key="9">
    <citation type="journal article" date="2008" name="Mol. Cell. Proteomics">
        <title>A multidimensional chromatography technology for in-depth phosphoproteome analysis.</title>
        <authorList>
            <person name="Albuquerque C.P."/>
            <person name="Smolka M.B."/>
            <person name="Payne S.H."/>
            <person name="Bafna V."/>
            <person name="Eng J."/>
            <person name="Zhou H."/>
        </authorList>
    </citation>
    <scope>PHOSPHORYLATION [LARGE SCALE ANALYSIS] AT THR-636</scope>
    <scope>IDENTIFICATION BY MASS SPECTROMETRY [LARGE SCALE ANALYSIS]</scope>
</reference>
<reference key="10">
    <citation type="journal article" date="2009" name="Science">
        <title>Global analysis of Cdk1 substrate phosphorylation sites provides insights into evolution.</title>
        <authorList>
            <person name="Holt L.J."/>
            <person name="Tuch B.B."/>
            <person name="Villen J."/>
            <person name="Johnson A.D."/>
            <person name="Gygi S.P."/>
            <person name="Morgan D.O."/>
        </authorList>
    </citation>
    <scope>PHOSPHORYLATION [LARGE SCALE ANALYSIS] AT THR-636</scope>
    <scope>IDENTIFICATION BY MASS SPECTROMETRY [LARGE SCALE ANALYSIS]</scope>
</reference>
<sequence>MVSANGDLHLPISNEQCMPENNGSLGFEAPTPRQILRVTLNLKYLIDKVVPIVYDPNDIVCDHSEILSPKVVKLAYEACGGNPKDKANKRKYQSVIIFSLLKVCEWYSILATMEVHNAKLYETRNLASQQLCKLLIEREETRDLQFLFMQLLLRRYVINENDEDQEPLNALELATDMHCTTVIGSSGFQRCLKWIWRGWIVQNGLDPTTFIKDDSLAEVSLISHFNPVRLKAPVYQNYLQMIFSFLFLGLYTLVVNGKDSERVQSFDLLESIFYVFNTGFILDELTKLYYIGYAHLSFWNLFNDTTYLIITFAMGFRAMSVTPLNAKYSSEDWDKISYRVLSCAAPFVWSRLLLYLESQRFIGIMLVILKHMMKESIVFFFLLFLIMIGFTQGFLGLDSADGKRDITGPILGNLTITVLGLGSFDVFEEFAPPYAAILYYGYYFIVSVILLNILIALYSTAYQKVIDNADDEYMALMSQKTLRYIRAPDEDVYVSPLNLIEVFMTPIFRILPPKRAKDLSYTVMTIVYSPFLLLISVKETREARRIKYNRMKRLNDDANEYDTPWDLTDGYLDDDDGLFSDNRNSGMRATQLKNSRSLKLQRTAEQEDVHFKVPKKWYKNVKKCSPSFEQYDNDDTEDDAGEDKDEVKELTKKVENLTAVITDLLEKLDIKDKKE</sequence>
<dbReference type="EMBL" id="X94335">
    <property type="protein sequence ID" value="CAA64009.1"/>
    <property type="status" value="ALT_FRAME"/>
    <property type="molecule type" value="Genomic_DNA"/>
</dbReference>
<dbReference type="EMBL" id="Z74995">
    <property type="protein sequence ID" value="CAA99282.1"/>
    <property type="status" value="ALT_FRAME"/>
    <property type="molecule type" value="Genomic_DNA"/>
</dbReference>
<dbReference type="EMBL" id="Z74995">
    <property type="protein sequence ID" value="CAA99283.1"/>
    <property type="status" value="ALT_FRAME"/>
    <property type="molecule type" value="Genomic_DNA"/>
</dbReference>
<dbReference type="EMBL" id="Z74997">
    <property type="protein sequence ID" value="CAA99286.1"/>
    <property type="molecule type" value="Genomic_DNA"/>
</dbReference>
<dbReference type="EMBL" id="BK006948">
    <property type="protein sequence ID" value="DAA10865.1"/>
    <property type="molecule type" value="Genomic_DNA"/>
</dbReference>
<dbReference type="PIR" id="S61648">
    <property type="entry name" value="S61648"/>
</dbReference>
<dbReference type="PIR" id="S66972">
    <property type="entry name" value="S66972"/>
</dbReference>
<dbReference type="RefSeq" id="NP_014730.2">
    <property type="nucleotide sequence ID" value="NM_001183506.1"/>
</dbReference>
<dbReference type="PDB" id="6WHG">
    <property type="method" value="EM"/>
    <property type="resolution" value="3.10 A"/>
    <property type="chains" value="A/B/C/D=1-675"/>
</dbReference>
<dbReference type="PDBsum" id="6WHG"/>
<dbReference type="EMDB" id="EMD-21672"/>
<dbReference type="SMR" id="Q12324"/>
<dbReference type="BioGRID" id="34486">
    <property type="interactions" value="165"/>
</dbReference>
<dbReference type="DIP" id="DIP-4157N"/>
<dbReference type="FunCoup" id="Q12324">
    <property type="interactions" value="45"/>
</dbReference>
<dbReference type="IntAct" id="Q12324">
    <property type="interactions" value="24"/>
</dbReference>
<dbReference type="MINT" id="Q12324"/>
<dbReference type="STRING" id="4932.YOR087W"/>
<dbReference type="TCDB" id="1.A.4.4.1">
    <property type="family name" value="the transient receptor potential ca2+/cation channel (trp-cc) family"/>
</dbReference>
<dbReference type="iPTMnet" id="Q12324"/>
<dbReference type="PaxDb" id="4932-YOR087W"/>
<dbReference type="PeptideAtlas" id="Q12324"/>
<dbReference type="EnsemblFungi" id="YOR087W_mRNA">
    <property type="protein sequence ID" value="YOR087W"/>
    <property type="gene ID" value="YOR087W"/>
</dbReference>
<dbReference type="GeneID" id="854255"/>
<dbReference type="KEGG" id="sce:YOR087W"/>
<dbReference type="AGR" id="SGD:S000005613"/>
<dbReference type="SGD" id="S000005613">
    <property type="gene designation" value="YVC1"/>
</dbReference>
<dbReference type="VEuPathDB" id="FungiDB:YOR087W"/>
<dbReference type="eggNOG" id="ENOG502QTER">
    <property type="taxonomic scope" value="Eukaryota"/>
</dbReference>
<dbReference type="GeneTree" id="ENSGT00940000169218"/>
<dbReference type="HOGENOM" id="CLU_014123_0_0_1"/>
<dbReference type="InParanoid" id="Q12324"/>
<dbReference type="OMA" id="YQKCIKY"/>
<dbReference type="OrthoDB" id="301415at2759"/>
<dbReference type="BioCyc" id="YEAST:G3O-33622-MONOMER"/>
<dbReference type="Reactome" id="R-SCE-3295583">
    <property type="pathway name" value="TRP channels"/>
</dbReference>
<dbReference type="BioGRID-ORCS" id="854255">
    <property type="hits" value="0 hits in 10 CRISPR screens"/>
</dbReference>
<dbReference type="PRO" id="PR:Q12324"/>
<dbReference type="Proteomes" id="UP000002311">
    <property type="component" value="Chromosome XV"/>
</dbReference>
<dbReference type="RNAct" id="Q12324">
    <property type="molecule type" value="protein"/>
</dbReference>
<dbReference type="GO" id="GO:0000324">
    <property type="term" value="C:fungal-type vacuole"/>
    <property type="evidence" value="ECO:0000314"/>
    <property type="project" value="SGD"/>
</dbReference>
<dbReference type="GO" id="GO:0000329">
    <property type="term" value="C:fungal-type vacuole membrane"/>
    <property type="evidence" value="ECO:0000314"/>
    <property type="project" value="SGD"/>
</dbReference>
<dbReference type="GO" id="GO:0005886">
    <property type="term" value="C:plasma membrane"/>
    <property type="evidence" value="ECO:0000318"/>
    <property type="project" value="GO_Central"/>
</dbReference>
<dbReference type="GO" id="GO:1990816">
    <property type="term" value="C:vacuole-mitochondrion membrane contact site"/>
    <property type="evidence" value="ECO:0000314"/>
    <property type="project" value="SGD"/>
</dbReference>
<dbReference type="GO" id="GO:0005262">
    <property type="term" value="F:calcium channel activity"/>
    <property type="evidence" value="ECO:0000314"/>
    <property type="project" value="SGD"/>
</dbReference>
<dbReference type="GO" id="GO:0005227">
    <property type="term" value="F:calcium-activated cation channel activity"/>
    <property type="evidence" value="ECO:0000314"/>
    <property type="project" value="SGD"/>
</dbReference>
<dbReference type="GO" id="GO:0005267">
    <property type="term" value="F:potassium channel activity"/>
    <property type="evidence" value="ECO:0000314"/>
    <property type="project" value="SGD"/>
</dbReference>
<dbReference type="GO" id="GO:0005272">
    <property type="term" value="F:sodium channel activity"/>
    <property type="evidence" value="ECO:0000314"/>
    <property type="project" value="SGD"/>
</dbReference>
<dbReference type="GO" id="GO:0005244">
    <property type="term" value="F:voltage-gated monoatomic ion channel activity"/>
    <property type="evidence" value="ECO:0000314"/>
    <property type="project" value="SGD"/>
</dbReference>
<dbReference type="GO" id="GO:0098703">
    <property type="term" value="P:calcium ion import across plasma membrane"/>
    <property type="evidence" value="ECO:0000318"/>
    <property type="project" value="GO_Central"/>
</dbReference>
<dbReference type="GO" id="GO:0097553">
    <property type="term" value="P:calcium ion transmembrane import into cytosol"/>
    <property type="evidence" value="ECO:0000315"/>
    <property type="project" value="SGD"/>
</dbReference>
<dbReference type="GO" id="GO:0030003">
    <property type="term" value="P:intracellular monoatomic cation homeostasis"/>
    <property type="evidence" value="ECO:0000314"/>
    <property type="project" value="SGD"/>
</dbReference>
<dbReference type="InterPro" id="IPR056337">
    <property type="entry name" value="LHD_YVC1"/>
</dbReference>
<dbReference type="InterPro" id="IPR052971">
    <property type="entry name" value="TRP_calcium_channel"/>
</dbReference>
<dbReference type="InterPro" id="IPR056336">
    <property type="entry name" value="YVC1_C"/>
</dbReference>
<dbReference type="PANTHER" id="PTHR35859">
    <property type="entry name" value="NONSELECTIVE CATION CHANNEL PROTEIN"/>
    <property type="match status" value="1"/>
</dbReference>
<dbReference type="PANTHER" id="PTHR35859:SF1">
    <property type="entry name" value="NONSELECTIVE CATION CHANNEL PROTEIN"/>
    <property type="match status" value="1"/>
</dbReference>
<dbReference type="Pfam" id="PF23190">
    <property type="entry name" value="LHD_TRPY1"/>
    <property type="match status" value="1"/>
</dbReference>
<dbReference type="Pfam" id="PF23317">
    <property type="entry name" value="YVC1_C"/>
    <property type="match status" value="1"/>
</dbReference>
<comment type="function">
    <text evidence="2 3">Required for release of calcium ions from the vacuole in response to hyperosmotic shock.</text>
</comment>
<comment type="subcellular location">
    <subcellularLocation>
        <location evidence="2 3">Vacuole membrane</location>
        <topology evidence="2 3">Multi-pass membrane protein</topology>
    </subcellularLocation>
</comment>
<comment type="miscellaneous">
    <text evidence="4">Present with 1310 molecules/cell in log phase SD medium.</text>
</comment>
<comment type="similarity">
    <text evidence="5">Belongs to the transient receptor (TC 1.A.4) family.</text>
</comment>
<comment type="sequence caution" evidence="5">
    <conflict type="frameshift">
        <sequence resource="EMBL-CDS" id="CAA64009"/>
    </conflict>
</comment>
<comment type="sequence caution" evidence="5">
    <conflict type="frameshift">
        <sequence resource="EMBL-CDS" id="CAA99282"/>
    </conflict>
</comment>
<comment type="sequence caution" evidence="5">
    <conflict type="frameshift">
        <sequence resource="EMBL-CDS" id="CAA99283"/>
    </conflict>
</comment>
<accession>Q12324</accession>
<accession>D6W2E9</accession>
<accession>Q08500</accession>
<accession>Q7LGN3</accession>
<organism>
    <name type="scientific">Saccharomyces cerevisiae (strain ATCC 204508 / S288c)</name>
    <name type="common">Baker's yeast</name>
    <dbReference type="NCBI Taxonomy" id="559292"/>
    <lineage>
        <taxon>Eukaryota</taxon>
        <taxon>Fungi</taxon>
        <taxon>Dikarya</taxon>
        <taxon>Ascomycota</taxon>
        <taxon>Saccharomycotina</taxon>
        <taxon>Saccharomycetes</taxon>
        <taxon>Saccharomycetales</taxon>
        <taxon>Saccharomycetaceae</taxon>
        <taxon>Saccharomyces</taxon>
    </lineage>
</organism>
<protein>
    <recommendedName>
        <fullName>Calcium channel YVC1</fullName>
    </recommendedName>
    <alternativeName>
        <fullName>TRP homolog</fullName>
    </alternativeName>
    <alternativeName>
        <fullName>Yeast vacuolar conductance protein 1</fullName>
    </alternativeName>
</protein>